<dbReference type="EMBL" id="CU928163">
    <property type="protein sequence ID" value="CAR13083.1"/>
    <property type="molecule type" value="Genomic_DNA"/>
</dbReference>
<dbReference type="RefSeq" id="WP_000046661.1">
    <property type="nucleotide sequence ID" value="NC_011751.1"/>
</dbReference>
<dbReference type="RefSeq" id="YP_002412617.1">
    <property type="nucleotide sequence ID" value="NC_011751.1"/>
</dbReference>
<dbReference type="SMR" id="B7NB49"/>
<dbReference type="GeneID" id="93775747"/>
<dbReference type="KEGG" id="eum:ECUMN_1884"/>
<dbReference type="PATRIC" id="fig|585056.7.peg.2071"/>
<dbReference type="HOGENOM" id="CLU_133067_0_4_6"/>
<dbReference type="Proteomes" id="UP000007097">
    <property type="component" value="Chromosome"/>
</dbReference>
<dbReference type="GO" id="GO:0005886">
    <property type="term" value="C:plasma membrane"/>
    <property type="evidence" value="ECO:0007669"/>
    <property type="project" value="UniProtKB-SubCell"/>
</dbReference>
<dbReference type="GO" id="GO:0015199">
    <property type="term" value="F:amino-acid betaine transmembrane transporter activity"/>
    <property type="evidence" value="ECO:0007669"/>
    <property type="project" value="TreeGrafter"/>
</dbReference>
<dbReference type="GO" id="GO:0015297">
    <property type="term" value="F:antiporter activity"/>
    <property type="evidence" value="ECO:0007669"/>
    <property type="project" value="TreeGrafter"/>
</dbReference>
<dbReference type="GO" id="GO:0015220">
    <property type="term" value="F:choline transmembrane transporter activity"/>
    <property type="evidence" value="ECO:0007669"/>
    <property type="project" value="TreeGrafter"/>
</dbReference>
<dbReference type="GO" id="GO:0015606">
    <property type="term" value="F:spermidine transmembrane transporter activity"/>
    <property type="evidence" value="ECO:0007669"/>
    <property type="project" value="UniProtKB-UniRule"/>
</dbReference>
<dbReference type="GO" id="GO:0031460">
    <property type="term" value="P:glycine betaine transport"/>
    <property type="evidence" value="ECO:0007669"/>
    <property type="project" value="TreeGrafter"/>
</dbReference>
<dbReference type="FunFam" id="1.10.3730.20:FF:000001">
    <property type="entry name" value="Quaternary ammonium compound resistance transporter SugE"/>
    <property type="match status" value="1"/>
</dbReference>
<dbReference type="Gene3D" id="1.10.3730.20">
    <property type="match status" value="1"/>
</dbReference>
<dbReference type="HAMAP" id="MF_01597">
    <property type="entry name" value="MdtI"/>
    <property type="match status" value="1"/>
</dbReference>
<dbReference type="InterPro" id="IPR000390">
    <property type="entry name" value="Small_drug/metabolite_transptr"/>
</dbReference>
<dbReference type="InterPro" id="IPR045324">
    <property type="entry name" value="Small_multidrug_res"/>
</dbReference>
<dbReference type="InterPro" id="IPR023737">
    <property type="entry name" value="Spermidine_export_MdtI"/>
</dbReference>
<dbReference type="NCBIfam" id="NF007934">
    <property type="entry name" value="PRK10650.1"/>
    <property type="match status" value="1"/>
</dbReference>
<dbReference type="PANTHER" id="PTHR30561">
    <property type="entry name" value="SMR FAMILY PROTON-DEPENDENT DRUG EFFLUX TRANSPORTER SUGE"/>
    <property type="match status" value="1"/>
</dbReference>
<dbReference type="PANTHER" id="PTHR30561:SF6">
    <property type="entry name" value="SPERMIDINE EXPORT PROTEIN MDTI"/>
    <property type="match status" value="1"/>
</dbReference>
<dbReference type="Pfam" id="PF00893">
    <property type="entry name" value="Multi_Drug_Res"/>
    <property type="match status" value="1"/>
</dbReference>
<dbReference type="SUPFAM" id="SSF103481">
    <property type="entry name" value="Multidrug resistance efflux transporter EmrE"/>
    <property type="match status" value="1"/>
</dbReference>
<reference key="1">
    <citation type="journal article" date="2009" name="PLoS Genet.">
        <title>Organised genome dynamics in the Escherichia coli species results in highly diverse adaptive paths.</title>
        <authorList>
            <person name="Touchon M."/>
            <person name="Hoede C."/>
            <person name="Tenaillon O."/>
            <person name="Barbe V."/>
            <person name="Baeriswyl S."/>
            <person name="Bidet P."/>
            <person name="Bingen E."/>
            <person name="Bonacorsi S."/>
            <person name="Bouchier C."/>
            <person name="Bouvet O."/>
            <person name="Calteau A."/>
            <person name="Chiapello H."/>
            <person name="Clermont O."/>
            <person name="Cruveiller S."/>
            <person name="Danchin A."/>
            <person name="Diard M."/>
            <person name="Dossat C."/>
            <person name="Karoui M.E."/>
            <person name="Frapy E."/>
            <person name="Garry L."/>
            <person name="Ghigo J.M."/>
            <person name="Gilles A.M."/>
            <person name="Johnson J."/>
            <person name="Le Bouguenec C."/>
            <person name="Lescat M."/>
            <person name="Mangenot S."/>
            <person name="Martinez-Jehanne V."/>
            <person name="Matic I."/>
            <person name="Nassif X."/>
            <person name="Oztas S."/>
            <person name="Petit M.A."/>
            <person name="Pichon C."/>
            <person name="Rouy Z."/>
            <person name="Ruf C.S."/>
            <person name="Schneider D."/>
            <person name="Tourret J."/>
            <person name="Vacherie B."/>
            <person name="Vallenet D."/>
            <person name="Medigue C."/>
            <person name="Rocha E.P.C."/>
            <person name="Denamur E."/>
        </authorList>
    </citation>
    <scope>NUCLEOTIDE SEQUENCE [LARGE SCALE GENOMIC DNA]</scope>
    <source>
        <strain>UMN026 / ExPEC</strain>
    </source>
</reference>
<gene>
    <name evidence="1" type="primary">mdtI</name>
    <name type="ordered locus">ECUMN_1884</name>
</gene>
<proteinExistence type="inferred from homology"/>
<comment type="function">
    <text evidence="1">Catalyzes the excretion of spermidine.</text>
</comment>
<comment type="subunit">
    <text evidence="1">Forms a complex with MdtJ.</text>
</comment>
<comment type="subcellular location">
    <subcellularLocation>
        <location evidence="1">Cell inner membrane</location>
        <topology evidence="1">Multi-pass membrane protein</topology>
    </subcellularLocation>
</comment>
<comment type="similarity">
    <text evidence="1">Belongs to the drug/metabolite transporter (DMT) superfamily. Small multidrug resistance (SMR) (TC 2.A.7.1) family. MdtI subfamily.</text>
</comment>
<feature type="chain" id="PRO_1000197314" description="Spermidine export protein MdtI">
    <location>
        <begin position="1"/>
        <end position="109"/>
    </location>
</feature>
<feature type="transmembrane region" description="Helical" evidence="1">
    <location>
        <begin position="6"/>
        <end position="26"/>
    </location>
</feature>
<feature type="transmembrane region" description="Helical" evidence="1">
    <location>
        <begin position="36"/>
        <end position="56"/>
    </location>
</feature>
<feature type="transmembrane region" description="Helical" evidence="1">
    <location>
        <begin position="64"/>
        <end position="84"/>
    </location>
</feature>
<feature type="transmembrane region" description="Helical" evidence="1">
    <location>
        <begin position="88"/>
        <end position="108"/>
    </location>
</feature>
<accession>B7NB49</accession>
<evidence type="ECO:0000255" key="1">
    <source>
        <dbReference type="HAMAP-Rule" id="MF_01597"/>
    </source>
</evidence>
<name>MDTI_ECOLU</name>
<sequence length="109" mass="11720">MAQFEWVHAAWLALAIVLEIVANVFLKFSDGFRRKIFGLLSLAAVLAAFSALSQAVKGIDLSVAYALWGGFGIAATLAAGWILFGQRLNRKGWIGLVLLLAGMIMVKLA</sequence>
<organism>
    <name type="scientific">Escherichia coli O17:K52:H18 (strain UMN026 / ExPEC)</name>
    <dbReference type="NCBI Taxonomy" id="585056"/>
    <lineage>
        <taxon>Bacteria</taxon>
        <taxon>Pseudomonadati</taxon>
        <taxon>Pseudomonadota</taxon>
        <taxon>Gammaproteobacteria</taxon>
        <taxon>Enterobacterales</taxon>
        <taxon>Enterobacteriaceae</taxon>
        <taxon>Escherichia</taxon>
    </lineage>
</organism>
<protein>
    <recommendedName>
        <fullName evidence="1">Spermidine export protein MdtI</fullName>
    </recommendedName>
</protein>
<keyword id="KW-0997">Cell inner membrane</keyword>
<keyword id="KW-1003">Cell membrane</keyword>
<keyword id="KW-0472">Membrane</keyword>
<keyword id="KW-0812">Transmembrane</keyword>
<keyword id="KW-1133">Transmembrane helix</keyword>
<keyword id="KW-0813">Transport</keyword>